<keyword id="KW-0106">Calcium</keyword>
<keyword id="KW-0479">Metal-binding</keyword>
<keyword id="KW-1185">Reference proteome</keyword>
<keyword id="KW-0677">Repeat</keyword>
<proteinExistence type="evidence at transcript level"/>
<dbReference type="EMBL" id="AF250344">
    <property type="protein sequence ID" value="AAG10150.1"/>
    <property type="molecule type" value="mRNA"/>
</dbReference>
<dbReference type="EMBL" id="AC002335">
    <property type="protein sequence ID" value="AAB64310.2"/>
    <property type="molecule type" value="Genomic_DNA"/>
</dbReference>
<dbReference type="EMBL" id="AC004450">
    <property type="protein sequence ID" value="AAM14938.1"/>
    <property type="molecule type" value="Genomic_DNA"/>
</dbReference>
<dbReference type="EMBL" id="CP002685">
    <property type="protein sequence ID" value="AEC10248.1"/>
    <property type="molecule type" value="Genomic_DNA"/>
</dbReference>
<dbReference type="EMBL" id="AY062815">
    <property type="protein sequence ID" value="AAL32893.1"/>
    <property type="molecule type" value="mRNA"/>
</dbReference>
<dbReference type="EMBL" id="AY081574">
    <property type="protein sequence ID" value="AAM10136.1"/>
    <property type="molecule type" value="mRNA"/>
</dbReference>
<dbReference type="EMBL" id="AY087087">
    <property type="protein sequence ID" value="AAM64648.1"/>
    <property type="molecule type" value="mRNA"/>
</dbReference>
<dbReference type="PIR" id="D84864">
    <property type="entry name" value="D84864"/>
</dbReference>
<dbReference type="RefSeq" id="NP_565996.1">
    <property type="nucleotide sequence ID" value="NM_129891.2"/>
</dbReference>
<dbReference type="SMR" id="O22845"/>
<dbReference type="BioGRID" id="4268">
    <property type="interactions" value="3"/>
</dbReference>
<dbReference type="FunCoup" id="O22845">
    <property type="interactions" value="206"/>
</dbReference>
<dbReference type="IntAct" id="O22845">
    <property type="interactions" value="3"/>
</dbReference>
<dbReference type="STRING" id="3702.O22845"/>
<dbReference type="iPTMnet" id="O22845"/>
<dbReference type="PaxDb" id="3702-AT2G43290.1"/>
<dbReference type="ProteomicsDB" id="241086"/>
<dbReference type="EnsemblPlants" id="AT2G43290.1">
    <property type="protein sequence ID" value="AT2G43290.1"/>
    <property type="gene ID" value="AT2G43290"/>
</dbReference>
<dbReference type="GeneID" id="818931"/>
<dbReference type="Gramene" id="AT2G43290.1">
    <property type="protein sequence ID" value="AT2G43290.1"/>
    <property type="gene ID" value="AT2G43290"/>
</dbReference>
<dbReference type="KEGG" id="ath:AT2G43290"/>
<dbReference type="Araport" id="AT2G43290"/>
<dbReference type="TAIR" id="AT2G43290">
    <property type="gene designation" value="MSS3"/>
</dbReference>
<dbReference type="eggNOG" id="KOG0027">
    <property type="taxonomic scope" value="Eukaryota"/>
</dbReference>
<dbReference type="HOGENOM" id="CLU_061288_20_3_1"/>
<dbReference type="InParanoid" id="O22845"/>
<dbReference type="OMA" id="DAEMSWL"/>
<dbReference type="OrthoDB" id="1085555at2759"/>
<dbReference type="PhylomeDB" id="O22845"/>
<dbReference type="PRO" id="PR:O22845"/>
<dbReference type="Proteomes" id="UP000006548">
    <property type="component" value="Chromosome 2"/>
</dbReference>
<dbReference type="ExpressionAtlas" id="O22845">
    <property type="expression patterns" value="baseline and differential"/>
</dbReference>
<dbReference type="GO" id="GO:0012505">
    <property type="term" value="C:endomembrane system"/>
    <property type="evidence" value="ECO:0000314"/>
    <property type="project" value="TAIR"/>
</dbReference>
<dbReference type="GO" id="GO:0010008">
    <property type="term" value="C:endosome membrane"/>
    <property type="evidence" value="ECO:0000314"/>
    <property type="project" value="CACAO"/>
</dbReference>
<dbReference type="GO" id="GO:0005509">
    <property type="term" value="F:calcium ion binding"/>
    <property type="evidence" value="ECO:0007669"/>
    <property type="project" value="InterPro"/>
</dbReference>
<dbReference type="CDD" id="cd00051">
    <property type="entry name" value="EFh"/>
    <property type="match status" value="1"/>
</dbReference>
<dbReference type="FunFam" id="1.10.238.10:FF:000089">
    <property type="entry name" value="calmodulin-like protein 3"/>
    <property type="match status" value="1"/>
</dbReference>
<dbReference type="FunFam" id="1.10.238.10:FF:000503">
    <property type="entry name" value="Calmodulin-like protein 5"/>
    <property type="match status" value="1"/>
</dbReference>
<dbReference type="Gene3D" id="1.10.238.10">
    <property type="entry name" value="EF-hand"/>
    <property type="match status" value="2"/>
</dbReference>
<dbReference type="InterPro" id="IPR011992">
    <property type="entry name" value="EF-hand-dom_pair"/>
</dbReference>
<dbReference type="InterPro" id="IPR018247">
    <property type="entry name" value="EF_Hand_1_Ca_BS"/>
</dbReference>
<dbReference type="InterPro" id="IPR002048">
    <property type="entry name" value="EF_hand_dom"/>
</dbReference>
<dbReference type="InterPro" id="IPR039647">
    <property type="entry name" value="EF_hand_pair_protein_CML-like"/>
</dbReference>
<dbReference type="PANTHER" id="PTHR10891">
    <property type="entry name" value="EF-HAND CALCIUM-BINDING DOMAIN CONTAINING PROTEIN"/>
    <property type="match status" value="1"/>
</dbReference>
<dbReference type="Pfam" id="PF13499">
    <property type="entry name" value="EF-hand_7"/>
    <property type="match status" value="2"/>
</dbReference>
<dbReference type="SMART" id="SM00054">
    <property type="entry name" value="EFh"/>
    <property type="match status" value="4"/>
</dbReference>
<dbReference type="SUPFAM" id="SSF47473">
    <property type="entry name" value="EF-hand"/>
    <property type="match status" value="1"/>
</dbReference>
<dbReference type="PROSITE" id="PS00018">
    <property type="entry name" value="EF_HAND_1"/>
    <property type="match status" value="4"/>
</dbReference>
<dbReference type="PROSITE" id="PS50222">
    <property type="entry name" value="EF_HAND_2"/>
    <property type="match status" value="4"/>
</dbReference>
<accession>O22845</accession>
<accession>Q9FV55</accession>
<sequence>MVRIFLLYNILNSFLLSLVPKKLRTLFPLSWFDKTLHKNSPPSPSTMLPSPSSSSAPTKRIDPSELKRVFQMFDKNGDGRITKEELNDSLENLGIYIPDKDLTQMIHKIDANGDGCVDIDEFESLYSSIVDEHHNDGETEEEDMKDAFNVFDQDGDGFITVEELKSVMASLGLKQGKTLDGCKKMIMQVDADGDGRVNYKEFLQMMKGGGFSSSN</sequence>
<protein>
    <recommendedName>
        <fullName>Calmodulin-like protein 5</fullName>
    </recommendedName>
    <alternativeName>
        <fullName>Protein MULTICOPY SUPPRESSORS OF SNF4 DEFICIENCY IN YEAST 3</fullName>
    </alternativeName>
</protein>
<evidence type="ECO:0000250" key="1"/>
<evidence type="ECO:0000255" key="2">
    <source>
        <dbReference type="PROSITE-ProRule" id="PRU00448"/>
    </source>
</evidence>
<evidence type="ECO:0000256" key="3">
    <source>
        <dbReference type="SAM" id="MobiDB-lite"/>
    </source>
</evidence>
<evidence type="ECO:0000269" key="4">
    <source>
    </source>
</evidence>
<evidence type="ECO:0000305" key="5"/>
<gene>
    <name type="primary">CML5</name>
    <name type="synonym">MSS3</name>
    <name type="ordered locus">At2g43290</name>
    <name type="ORF">F14B2.33</name>
    <name type="ORF">T1O24.3</name>
</gene>
<feature type="chain" id="PRO_0000342888" description="Calmodulin-like protein 5">
    <location>
        <begin position="1"/>
        <end position="215"/>
    </location>
</feature>
<feature type="domain" description="EF-hand 1" evidence="2">
    <location>
        <begin position="61"/>
        <end position="96"/>
    </location>
</feature>
<feature type="domain" description="EF-hand 2" evidence="2">
    <location>
        <begin position="97"/>
        <end position="132"/>
    </location>
</feature>
<feature type="domain" description="EF-hand 3" evidence="2">
    <location>
        <begin position="139"/>
        <end position="174"/>
    </location>
</feature>
<feature type="domain" description="EF-hand 4" evidence="2">
    <location>
        <begin position="177"/>
        <end position="212"/>
    </location>
</feature>
<feature type="region of interest" description="Disordered" evidence="3">
    <location>
        <begin position="38"/>
        <end position="61"/>
    </location>
</feature>
<feature type="compositionally biased region" description="Low complexity" evidence="3">
    <location>
        <begin position="45"/>
        <end position="57"/>
    </location>
</feature>
<feature type="binding site" evidence="2">
    <location>
        <position position="74"/>
    </location>
    <ligand>
        <name>Ca(2+)</name>
        <dbReference type="ChEBI" id="CHEBI:29108"/>
        <label>1</label>
    </ligand>
</feature>
<feature type="binding site" evidence="2">
    <location>
        <position position="76"/>
    </location>
    <ligand>
        <name>Ca(2+)</name>
        <dbReference type="ChEBI" id="CHEBI:29108"/>
        <label>1</label>
    </ligand>
</feature>
<feature type="binding site" evidence="2">
    <location>
        <position position="78"/>
    </location>
    <ligand>
        <name>Ca(2+)</name>
        <dbReference type="ChEBI" id="CHEBI:29108"/>
        <label>1</label>
    </ligand>
</feature>
<feature type="binding site" evidence="2">
    <location>
        <position position="80"/>
    </location>
    <ligand>
        <name>Ca(2+)</name>
        <dbReference type="ChEBI" id="CHEBI:29108"/>
        <label>1</label>
    </ligand>
</feature>
<feature type="binding site" evidence="2">
    <location>
        <position position="85"/>
    </location>
    <ligand>
        <name>Ca(2+)</name>
        <dbReference type="ChEBI" id="CHEBI:29108"/>
        <label>1</label>
    </ligand>
</feature>
<feature type="binding site" evidence="2">
    <location>
        <position position="110"/>
    </location>
    <ligand>
        <name>Ca(2+)</name>
        <dbReference type="ChEBI" id="CHEBI:29108"/>
        <label>2</label>
    </ligand>
</feature>
<feature type="binding site" evidence="2">
    <location>
        <position position="112"/>
    </location>
    <ligand>
        <name>Ca(2+)</name>
        <dbReference type="ChEBI" id="CHEBI:29108"/>
        <label>2</label>
    </ligand>
</feature>
<feature type="binding site" evidence="2">
    <location>
        <position position="114"/>
    </location>
    <ligand>
        <name>Ca(2+)</name>
        <dbReference type="ChEBI" id="CHEBI:29108"/>
        <label>2</label>
    </ligand>
</feature>
<feature type="binding site" evidence="2">
    <location>
        <position position="116"/>
    </location>
    <ligand>
        <name>Ca(2+)</name>
        <dbReference type="ChEBI" id="CHEBI:29108"/>
        <label>2</label>
    </ligand>
</feature>
<feature type="binding site" evidence="2">
    <location>
        <position position="121"/>
    </location>
    <ligand>
        <name>Ca(2+)</name>
        <dbReference type="ChEBI" id="CHEBI:29108"/>
        <label>2</label>
    </ligand>
</feature>
<feature type="binding site" evidence="2">
    <location>
        <position position="152"/>
    </location>
    <ligand>
        <name>Ca(2+)</name>
        <dbReference type="ChEBI" id="CHEBI:29108"/>
        <label>3</label>
    </ligand>
</feature>
<feature type="binding site" evidence="2">
    <location>
        <position position="154"/>
    </location>
    <ligand>
        <name>Ca(2+)</name>
        <dbReference type="ChEBI" id="CHEBI:29108"/>
        <label>3</label>
    </ligand>
</feature>
<feature type="binding site" evidence="2">
    <location>
        <position position="156"/>
    </location>
    <ligand>
        <name>Ca(2+)</name>
        <dbReference type="ChEBI" id="CHEBI:29108"/>
        <label>3</label>
    </ligand>
</feature>
<feature type="binding site" evidence="2">
    <location>
        <position position="163"/>
    </location>
    <ligand>
        <name>Ca(2+)</name>
        <dbReference type="ChEBI" id="CHEBI:29108"/>
        <label>3</label>
    </ligand>
</feature>
<feature type="binding site" evidence="2">
    <location>
        <position position="190"/>
    </location>
    <ligand>
        <name>Ca(2+)</name>
        <dbReference type="ChEBI" id="CHEBI:29108"/>
        <label>4</label>
    </ligand>
</feature>
<feature type="binding site" evidence="2">
    <location>
        <position position="192"/>
    </location>
    <ligand>
        <name>Ca(2+)</name>
        <dbReference type="ChEBI" id="CHEBI:29108"/>
        <label>4</label>
    </ligand>
</feature>
<feature type="binding site" evidence="2">
    <location>
        <position position="194"/>
    </location>
    <ligand>
        <name>Ca(2+)</name>
        <dbReference type="ChEBI" id="CHEBI:29108"/>
        <label>4</label>
    </ligand>
</feature>
<feature type="binding site" evidence="2">
    <location>
        <position position="196"/>
    </location>
    <ligand>
        <name>Ca(2+)</name>
        <dbReference type="ChEBI" id="CHEBI:29108"/>
        <label>4</label>
    </ligand>
</feature>
<feature type="binding site" evidence="2">
    <location>
        <position position="201"/>
    </location>
    <ligand>
        <name>Ca(2+)</name>
        <dbReference type="ChEBI" id="CHEBI:29108"/>
        <label>4</label>
    </ligand>
</feature>
<comment type="function">
    <text evidence="1">Potential calcium sensor.</text>
</comment>
<comment type="induction">
    <text evidence="4">By touch and during darkness conditions.</text>
</comment>
<comment type="similarity">
    <text evidence="5">Belongs to the calmodulin family.</text>
</comment>
<organism>
    <name type="scientific">Arabidopsis thaliana</name>
    <name type="common">Mouse-ear cress</name>
    <dbReference type="NCBI Taxonomy" id="3702"/>
    <lineage>
        <taxon>Eukaryota</taxon>
        <taxon>Viridiplantae</taxon>
        <taxon>Streptophyta</taxon>
        <taxon>Embryophyta</taxon>
        <taxon>Tracheophyta</taxon>
        <taxon>Spermatophyta</taxon>
        <taxon>Magnoliopsida</taxon>
        <taxon>eudicotyledons</taxon>
        <taxon>Gunneridae</taxon>
        <taxon>Pentapetalae</taxon>
        <taxon>rosids</taxon>
        <taxon>malvids</taxon>
        <taxon>Brassicales</taxon>
        <taxon>Brassicaceae</taxon>
        <taxon>Camelineae</taxon>
        <taxon>Arabidopsis</taxon>
    </lineage>
</organism>
<name>CML5_ARATH</name>
<reference key="1">
    <citation type="journal article" date="2000" name="Plant J.">
        <title>Functional identification of an Arabidopsis Snf4 ortholog by screening for heterologous multicopy suppressors of snf4 deficiency in yeast.</title>
        <authorList>
            <person name="Kleinow T."/>
            <person name="Bhalerao R."/>
            <person name="Breuer F."/>
            <person name="Umeda M."/>
            <person name="Salchert K."/>
            <person name="Koncz C."/>
        </authorList>
    </citation>
    <scope>NUCLEOTIDE SEQUENCE [MRNA]</scope>
    <source>
        <strain>cv. Columbia</strain>
    </source>
</reference>
<reference key="2">
    <citation type="journal article" date="1999" name="Nature">
        <title>Sequence and analysis of chromosome 2 of the plant Arabidopsis thaliana.</title>
        <authorList>
            <person name="Lin X."/>
            <person name="Kaul S."/>
            <person name="Rounsley S.D."/>
            <person name="Shea T.P."/>
            <person name="Benito M.-I."/>
            <person name="Town C.D."/>
            <person name="Fujii C.Y."/>
            <person name="Mason T.M."/>
            <person name="Bowman C.L."/>
            <person name="Barnstead M.E."/>
            <person name="Feldblyum T.V."/>
            <person name="Buell C.R."/>
            <person name="Ketchum K.A."/>
            <person name="Lee J.J."/>
            <person name="Ronning C.M."/>
            <person name="Koo H.L."/>
            <person name="Moffat K.S."/>
            <person name="Cronin L.A."/>
            <person name="Shen M."/>
            <person name="Pai G."/>
            <person name="Van Aken S."/>
            <person name="Umayam L."/>
            <person name="Tallon L.J."/>
            <person name="Gill J.E."/>
            <person name="Adams M.D."/>
            <person name="Carrera A.J."/>
            <person name="Creasy T.H."/>
            <person name="Goodman H.M."/>
            <person name="Somerville C.R."/>
            <person name="Copenhaver G.P."/>
            <person name="Preuss D."/>
            <person name="Nierman W.C."/>
            <person name="White O."/>
            <person name="Eisen J.A."/>
            <person name="Salzberg S.L."/>
            <person name="Fraser C.M."/>
            <person name="Venter J.C."/>
        </authorList>
    </citation>
    <scope>NUCLEOTIDE SEQUENCE [LARGE SCALE GENOMIC DNA]</scope>
    <source>
        <strain>cv. Columbia</strain>
    </source>
</reference>
<reference key="3">
    <citation type="journal article" date="2017" name="Plant J.">
        <title>Araport11: a complete reannotation of the Arabidopsis thaliana reference genome.</title>
        <authorList>
            <person name="Cheng C.Y."/>
            <person name="Krishnakumar V."/>
            <person name="Chan A.P."/>
            <person name="Thibaud-Nissen F."/>
            <person name="Schobel S."/>
            <person name="Town C.D."/>
        </authorList>
    </citation>
    <scope>GENOME REANNOTATION</scope>
    <source>
        <strain>cv. Columbia</strain>
    </source>
</reference>
<reference key="4">
    <citation type="journal article" date="2003" name="Science">
        <title>Empirical analysis of transcriptional activity in the Arabidopsis genome.</title>
        <authorList>
            <person name="Yamada K."/>
            <person name="Lim J."/>
            <person name="Dale J.M."/>
            <person name="Chen H."/>
            <person name="Shinn P."/>
            <person name="Palm C.J."/>
            <person name="Southwick A.M."/>
            <person name="Wu H.C."/>
            <person name="Kim C.J."/>
            <person name="Nguyen M."/>
            <person name="Pham P.K."/>
            <person name="Cheuk R.F."/>
            <person name="Karlin-Newmann G."/>
            <person name="Liu S.X."/>
            <person name="Lam B."/>
            <person name="Sakano H."/>
            <person name="Wu T."/>
            <person name="Yu G."/>
            <person name="Miranda M."/>
            <person name="Quach H.L."/>
            <person name="Tripp M."/>
            <person name="Chang C.H."/>
            <person name="Lee J.M."/>
            <person name="Toriumi M.J."/>
            <person name="Chan M.M."/>
            <person name="Tang C.C."/>
            <person name="Onodera C.S."/>
            <person name="Deng J.M."/>
            <person name="Akiyama K."/>
            <person name="Ansari Y."/>
            <person name="Arakawa T."/>
            <person name="Banh J."/>
            <person name="Banno F."/>
            <person name="Bowser L."/>
            <person name="Brooks S.Y."/>
            <person name="Carninci P."/>
            <person name="Chao Q."/>
            <person name="Choy N."/>
            <person name="Enju A."/>
            <person name="Goldsmith A.D."/>
            <person name="Gurjal M."/>
            <person name="Hansen N.F."/>
            <person name="Hayashizaki Y."/>
            <person name="Johnson-Hopson C."/>
            <person name="Hsuan V.W."/>
            <person name="Iida K."/>
            <person name="Karnes M."/>
            <person name="Khan S."/>
            <person name="Koesema E."/>
            <person name="Ishida J."/>
            <person name="Jiang P.X."/>
            <person name="Jones T."/>
            <person name="Kawai J."/>
            <person name="Kamiya A."/>
            <person name="Meyers C."/>
            <person name="Nakajima M."/>
            <person name="Narusaka M."/>
            <person name="Seki M."/>
            <person name="Sakurai T."/>
            <person name="Satou M."/>
            <person name="Tamse R."/>
            <person name="Vaysberg M."/>
            <person name="Wallender E.K."/>
            <person name="Wong C."/>
            <person name="Yamamura Y."/>
            <person name="Yuan S."/>
            <person name="Shinozaki K."/>
            <person name="Davis R.W."/>
            <person name="Theologis A."/>
            <person name="Ecker J.R."/>
        </authorList>
    </citation>
    <scope>NUCLEOTIDE SEQUENCE [LARGE SCALE MRNA]</scope>
    <source>
        <strain>cv. Columbia</strain>
    </source>
</reference>
<reference key="5">
    <citation type="submission" date="2002-03" db="EMBL/GenBank/DDBJ databases">
        <title>Full-length cDNA from Arabidopsis thaliana.</title>
        <authorList>
            <person name="Brover V.V."/>
            <person name="Troukhan M.E."/>
            <person name="Alexandrov N.A."/>
            <person name="Lu Y.-P."/>
            <person name="Flavell R.B."/>
            <person name="Feldmann K.A."/>
        </authorList>
    </citation>
    <scope>NUCLEOTIDE SEQUENCE [LARGE SCALE MRNA]</scope>
</reference>
<reference key="6">
    <citation type="journal article" date="2003" name="New Phytol.">
        <title>Calmodulins and related potential calcium sensors of Arabidopsis.</title>
        <authorList>
            <person name="McCormack E."/>
            <person name="Braam J."/>
        </authorList>
    </citation>
    <scope>GENE FAMILY</scope>
    <scope>NOMENCLATURE</scope>
</reference>
<reference key="7">
    <citation type="journal article" date="2005" name="New Phytol.">
        <title>Genome-wide identification of touch- and darkness-regulated Arabidopsis genes: a focus on calmodulin-like and XTH genes.</title>
        <authorList>
            <person name="Lee D."/>
            <person name="Polisensky D.H."/>
            <person name="Braam J."/>
        </authorList>
    </citation>
    <scope>INDUCTION</scope>
</reference>